<protein>
    <recommendedName>
        <fullName>Transforming protein RhoA</fullName>
        <ecNumber evidence="11">3.6.5.2</ecNumber>
    </recommendedName>
</protein>
<proteinExistence type="evidence at protein level"/>
<reference key="1">
    <citation type="journal article" date="1998" name="Genomics">
        <title>Transposition of RhoA to the murine Y chromosome.</title>
        <authorList>
            <person name="Boettger-Tong H.L."/>
            <person name="Agulnik A.I."/>
            <person name="Ty T.I."/>
            <person name="Bishop C.E."/>
        </authorList>
    </citation>
    <scope>NUCLEOTIDE SEQUENCE [MRNA]</scope>
    <source>
        <strain>C57BL/6J</strain>
    </source>
</reference>
<reference key="2">
    <citation type="submission" date="1999-08" db="EMBL/GenBank/DDBJ databases">
        <authorList>
            <person name="Budge P.J."/>
            <person name="Graham B.S."/>
        </authorList>
    </citation>
    <scope>NUCLEOTIDE SEQUENCE [MRNA]</scope>
    <source>
        <strain>BALB/cJ</strain>
        <strain>C57BL/6J</strain>
        <strain>CD-1</strain>
        <strain>FVB/N</strain>
    </source>
</reference>
<reference key="3">
    <citation type="journal article" date="2005" name="Science">
        <title>The transcriptional landscape of the mammalian genome.</title>
        <authorList>
            <person name="Carninci P."/>
            <person name="Kasukawa T."/>
            <person name="Katayama S."/>
            <person name="Gough J."/>
            <person name="Frith M.C."/>
            <person name="Maeda N."/>
            <person name="Oyama R."/>
            <person name="Ravasi T."/>
            <person name="Lenhard B."/>
            <person name="Wells C."/>
            <person name="Kodzius R."/>
            <person name="Shimokawa K."/>
            <person name="Bajic V.B."/>
            <person name="Brenner S.E."/>
            <person name="Batalov S."/>
            <person name="Forrest A.R."/>
            <person name="Zavolan M."/>
            <person name="Davis M.J."/>
            <person name="Wilming L.G."/>
            <person name="Aidinis V."/>
            <person name="Allen J.E."/>
            <person name="Ambesi-Impiombato A."/>
            <person name="Apweiler R."/>
            <person name="Aturaliya R.N."/>
            <person name="Bailey T.L."/>
            <person name="Bansal M."/>
            <person name="Baxter L."/>
            <person name="Beisel K.W."/>
            <person name="Bersano T."/>
            <person name="Bono H."/>
            <person name="Chalk A.M."/>
            <person name="Chiu K.P."/>
            <person name="Choudhary V."/>
            <person name="Christoffels A."/>
            <person name="Clutterbuck D.R."/>
            <person name="Crowe M.L."/>
            <person name="Dalla E."/>
            <person name="Dalrymple B.P."/>
            <person name="de Bono B."/>
            <person name="Della Gatta G."/>
            <person name="di Bernardo D."/>
            <person name="Down T."/>
            <person name="Engstrom P."/>
            <person name="Fagiolini M."/>
            <person name="Faulkner G."/>
            <person name="Fletcher C.F."/>
            <person name="Fukushima T."/>
            <person name="Furuno M."/>
            <person name="Futaki S."/>
            <person name="Gariboldi M."/>
            <person name="Georgii-Hemming P."/>
            <person name="Gingeras T.R."/>
            <person name="Gojobori T."/>
            <person name="Green R.E."/>
            <person name="Gustincich S."/>
            <person name="Harbers M."/>
            <person name="Hayashi Y."/>
            <person name="Hensch T.K."/>
            <person name="Hirokawa N."/>
            <person name="Hill D."/>
            <person name="Huminiecki L."/>
            <person name="Iacono M."/>
            <person name="Ikeo K."/>
            <person name="Iwama A."/>
            <person name="Ishikawa T."/>
            <person name="Jakt M."/>
            <person name="Kanapin A."/>
            <person name="Katoh M."/>
            <person name="Kawasawa Y."/>
            <person name="Kelso J."/>
            <person name="Kitamura H."/>
            <person name="Kitano H."/>
            <person name="Kollias G."/>
            <person name="Krishnan S.P."/>
            <person name="Kruger A."/>
            <person name="Kummerfeld S.K."/>
            <person name="Kurochkin I.V."/>
            <person name="Lareau L.F."/>
            <person name="Lazarevic D."/>
            <person name="Lipovich L."/>
            <person name="Liu J."/>
            <person name="Liuni S."/>
            <person name="McWilliam S."/>
            <person name="Madan Babu M."/>
            <person name="Madera M."/>
            <person name="Marchionni L."/>
            <person name="Matsuda H."/>
            <person name="Matsuzawa S."/>
            <person name="Miki H."/>
            <person name="Mignone F."/>
            <person name="Miyake S."/>
            <person name="Morris K."/>
            <person name="Mottagui-Tabar S."/>
            <person name="Mulder N."/>
            <person name="Nakano N."/>
            <person name="Nakauchi H."/>
            <person name="Ng P."/>
            <person name="Nilsson R."/>
            <person name="Nishiguchi S."/>
            <person name="Nishikawa S."/>
            <person name="Nori F."/>
            <person name="Ohara O."/>
            <person name="Okazaki Y."/>
            <person name="Orlando V."/>
            <person name="Pang K.C."/>
            <person name="Pavan W.J."/>
            <person name="Pavesi G."/>
            <person name="Pesole G."/>
            <person name="Petrovsky N."/>
            <person name="Piazza S."/>
            <person name="Reed J."/>
            <person name="Reid J.F."/>
            <person name="Ring B.Z."/>
            <person name="Ringwald M."/>
            <person name="Rost B."/>
            <person name="Ruan Y."/>
            <person name="Salzberg S.L."/>
            <person name="Sandelin A."/>
            <person name="Schneider C."/>
            <person name="Schoenbach C."/>
            <person name="Sekiguchi K."/>
            <person name="Semple C.A."/>
            <person name="Seno S."/>
            <person name="Sessa L."/>
            <person name="Sheng Y."/>
            <person name="Shibata Y."/>
            <person name="Shimada H."/>
            <person name="Shimada K."/>
            <person name="Silva D."/>
            <person name="Sinclair B."/>
            <person name="Sperling S."/>
            <person name="Stupka E."/>
            <person name="Sugiura K."/>
            <person name="Sultana R."/>
            <person name="Takenaka Y."/>
            <person name="Taki K."/>
            <person name="Tammoja K."/>
            <person name="Tan S.L."/>
            <person name="Tang S."/>
            <person name="Taylor M.S."/>
            <person name="Tegner J."/>
            <person name="Teichmann S.A."/>
            <person name="Ueda H.R."/>
            <person name="van Nimwegen E."/>
            <person name="Verardo R."/>
            <person name="Wei C.L."/>
            <person name="Yagi K."/>
            <person name="Yamanishi H."/>
            <person name="Zabarovsky E."/>
            <person name="Zhu S."/>
            <person name="Zimmer A."/>
            <person name="Hide W."/>
            <person name="Bult C."/>
            <person name="Grimmond S.M."/>
            <person name="Teasdale R.D."/>
            <person name="Liu E.T."/>
            <person name="Brusic V."/>
            <person name="Quackenbush J."/>
            <person name="Wahlestedt C."/>
            <person name="Mattick J.S."/>
            <person name="Hume D.A."/>
            <person name="Kai C."/>
            <person name="Sasaki D."/>
            <person name="Tomaru Y."/>
            <person name="Fukuda S."/>
            <person name="Kanamori-Katayama M."/>
            <person name="Suzuki M."/>
            <person name="Aoki J."/>
            <person name="Arakawa T."/>
            <person name="Iida J."/>
            <person name="Imamura K."/>
            <person name="Itoh M."/>
            <person name="Kato T."/>
            <person name="Kawaji H."/>
            <person name="Kawagashira N."/>
            <person name="Kawashima T."/>
            <person name="Kojima M."/>
            <person name="Kondo S."/>
            <person name="Konno H."/>
            <person name="Nakano K."/>
            <person name="Ninomiya N."/>
            <person name="Nishio T."/>
            <person name="Okada M."/>
            <person name="Plessy C."/>
            <person name="Shibata K."/>
            <person name="Shiraki T."/>
            <person name="Suzuki S."/>
            <person name="Tagami M."/>
            <person name="Waki K."/>
            <person name="Watahiki A."/>
            <person name="Okamura-Oho Y."/>
            <person name="Suzuki H."/>
            <person name="Kawai J."/>
            <person name="Hayashizaki Y."/>
        </authorList>
    </citation>
    <scope>NUCLEOTIDE SEQUENCE [LARGE SCALE MRNA]</scope>
    <source>
        <strain>C57BL/6J</strain>
    </source>
</reference>
<reference key="4">
    <citation type="journal article" date="2004" name="Genome Res.">
        <title>The status, quality, and expansion of the NIH full-length cDNA project: the Mammalian Gene Collection (MGC).</title>
        <authorList>
            <consortium name="The MGC Project Team"/>
        </authorList>
    </citation>
    <scope>NUCLEOTIDE SEQUENCE [LARGE SCALE MRNA]</scope>
    <source>
        <strain>C57BL/6J</strain>
        <tissue>Brain</tissue>
    </source>
</reference>
<reference key="5">
    <citation type="journal article" date="1996" name="J. Biol. Chem.">
        <title>Rhotekin, a new putative target for Rho bearing homology to a serine/threonine kinase, PKN, and rhophilin in the rho-binding domain.</title>
        <authorList>
            <person name="Reid T."/>
            <person name="Furuyashiki T."/>
            <person name="Ishizaki T."/>
            <person name="Watanabe G."/>
            <person name="Watanabe N."/>
            <person name="Fujisawa K."/>
            <person name="Morii N."/>
            <person name="Madaule P."/>
            <person name="Narumiya S."/>
        </authorList>
    </citation>
    <scope>INTERACTION WITH RTKN</scope>
</reference>
<reference key="6">
    <citation type="journal article" date="1997" name="EMBO J.">
        <title>p140mDia, a mammalian homolog of Drosophila diaphanous, is a target protein for Rho small GTPase and is a ligand for profilin.</title>
        <authorList>
            <person name="Watanabe N."/>
            <person name="Madaule P."/>
            <person name="Reid T."/>
            <person name="Ishizaki T."/>
            <person name="Watanabe G."/>
            <person name="Kakizuka A."/>
            <person name="Saito Y."/>
            <person name="Nakao K."/>
            <person name="Jockusch B.M."/>
            <person name="Narumiya S."/>
        </authorList>
    </citation>
    <scope>INTERACTION WITH DIAPH1</scope>
</reference>
<reference key="7">
    <citation type="journal article" date="1998" name="Cell">
        <title>The small GTP-binding protein RhoA regulates a delayed rectifier potassium channel.</title>
        <authorList>
            <person name="Cachero T.G."/>
            <person name="Morielli A.D."/>
            <person name="Peralta E.G."/>
        </authorList>
    </citation>
    <scope>FUNCTION</scope>
    <scope>INTERACTION WITH KCNA2</scope>
</reference>
<reference key="8">
    <citation type="journal article" date="1998" name="J. Biol. Chem.">
        <title>Analysis of RhoA-binding proteins reveals an interaction domain conserved in heterotrimeric G protein beta subunits and the yeast response regulator protein Skn7.</title>
        <authorList>
            <person name="Alberts A.S."/>
            <person name="Bouquin N."/>
            <person name="Johnston L.H."/>
            <person name="Treisman R."/>
        </authorList>
    </citation>
    <scope>INTERACTION WITH NET1</scope>
</reference>
<reference key="9">
    <citation type="journal article" date="2001" name="J. Biol. Chem.">
        <title>Characterization of p190RhoGEF, a RhoA-specific guanine nucleotide exchange factor that interacts with microtubules.</title>
        <authorList>
            <person name="van Horck F.P.G."/>
            <person name="Ahmadian M.R."/>
            <person name="Haeusler L.C."/>
            <person name="Moolenaar W.H."/>
            <person name="Kranenburg O."/>
        </authorList>
    </citation>
    <scope>INTERACTION WITH ARHGEF28</scope>
</reference>
<reference key="10">
    <citation type="journal article" date="2003" name="Cell">
        <title>Serotonylation of small GTPases is a signal transduction pathway that triggers platelet alpha-granule release.</title>
        <authorList>
            <person name="Walther D.J."/>
            <person name="Peter J.U."/>
            <person name="Winter S."/>
            <person name="Hoeltje M."/>
            <person name="Paulmann N."/>
            <person name="Grohmann M."/>
            <person name="Vowinckel J."/>
            <person name="Alamo-Bethencourt V."/>
            <person name="Wilhelm C.S."/>
            <person name="Ahnert-Hilger G."/>
            <person name="Bader M."/>
        </authorList>
    </citation>
    <scope>FUNCTION</scope>
    <scope>SEROTONYLATION AT GLN-63</scope>
</reference>
<reference key="11">
    <citation type="journal article" date="2002" name="J. Cell Biol.">
        <title>Fyn tyrosine kinase is a downstream mediator of Rho/PRK2 function in keratinocyte cell-cell adhesion.</title>
        <authorList>
            <person name="Calautti E."/>
            <person name="Grossi M."/>
            <person name="Mammucari C."/>
            <person name="Aoyama Y."/>
            <person name="Pirro M."/>
            <person name="Ono Y."/>
            <person name="Li J."/>
            <person name="Dotto G.P."/>
        </authorList>
    </citation>
    <scope>FUNCTION</scope>
    <scope>INDUCTION</scope>
    <scope>SUBCELLULAR LOCATION</scope>
</reference>
<reference key="12">
    <citation type="journal article" date="2010" name="Cell">
        <title>A tissue-specific atlas of mouse protein phosphorylation and expression.</title>
        <authorList>
            <person name="Huttlin E.L."/>
            <person name="Jedrychowski M.P."/>
            <person name="Elias J.E."/>
            <person name="Goswami T."/>
            <person name="Rad R."/>
            <person name="Beausoleil S.A."/>
            <person name="Villen J."/>
            <person name="Haas W."/>
            <person name="Sowa M.E."/>
            <person name="Gygi S.P."/>
        </authorList>
    </citation>
    <scope>IDENTIFICATION BY MASS SPECTROMETRY [LARGE SCALE ANALYSIS]</scope>
    <source>
        <tissue>Brain</tissue>
        <tissue>Brown adipose tissue</tissue>
        <tissue>Heart</tissue>
        <tissue>Kidney</tissue>
        <tissue>Liver</tissue>
        <tissue>Lung</tissue>
        <tissue>Pancreas</tissue>
        <tissue>Spleen</tissue>
        <tissue>Testis</tissue>
    </source>
</reference>
<reference key="13">
    <citation type="journal article" date="2011" name="J. Biol. Chem.">
        <title>Rab13-dependent trafficking of RhoA is required for directional migration and angiogenesis.</title>
        <authorList>
            <person name="Wu C."/>
            <person name="Agrawal S."/>
            <person name="Vasanji A."/>
            <person name="Drazba J."/>
            <person name="Sarkaria S."/>
            <person name="Xie J."/>
            <person name="Welch C.M."/>
            <person name="Liu M."/>
            <person name="Anand-Apte B."/>
            <person name="Horowitz A."/>
        </authorList>
    </citation>
    <scope>SUBCELLULAR LOCATION</scope>
</reference>
<reference key="14">
    <citation type="journal article" date="2011" name="Mol. Cell. Biol.">
        <title>The Rho target PRK2 regulates apical junction formation in human bronchial epithelial cells.</title>
        <authorList>
            <person name="Wallace S.W."/>
            <person name="Magalhaes A."/>
            <person name="Hall A."/>
        </authorList>
    </citation>
    <scope>FUNCTION</scope>
    <scope>INTERACTION WITH PKN2</scope>
</reference>
<reference key="15">
    <citation type="journal article" date="2014" name="J. Biol. Chem.">
        <title>Rho-GTPase-activating protein interacting with Cdc-42-interacting protein 4 homolog 2 (Rich2): a new Ras-related C3 botulinum toxin substrate 1 (Rac1) GTPase-activating protein that controls dendritic spine morphogenesis.</title>
        <authorList>
            <person name="Raynaud F."/>
            <person name="Moutin E."/>
            <person name="Schmidt S."/>
            <person name="Dahl J."/>
            <person name="Bertaso F."/>
            <person name="Boeckers T.M."/>
            <person name="Homburger V."/>
            <person name="Fagni L."/>
        </authorList>
    </citation>
    <scope>CATALYTIC ACTIVITY</scope>
    <scope>FUNCTION</scope>
    <scope>SUBCELLULAR LOCATION</scope>
</reference>
<reference key="16">
    <citation type="journal article" date="2017" name="Exp. Cell Res.">
        <title>Depletion of tumor suppressor Kank1 induces centrosomal amplification via hyperactivation of RhoA.</title>
        <authorList>
            <person name="Suzuki J.I."/>
            <person name="Roy B.C."/>
            <person name="Ogaeri T."/>
            <person name="Kakinuma N."/>
            <person name="Kiyama R."/>
        </authorList>
    </citation>
    <scope>FUNCTION</scope>
    <scope>SUBCELLULAR LOCATION</scope>
</reference>
<reference key="17">
    <citation type="journal article" date="2017" name="Nature">
        <title>Kctd13 deletion reduces synaptic transmission via increased RhoA.</title>
        <authorList>
            <person name="Escamilla C.O."/>
            <person name="Filonova I."/>
            <person name="Walker A.K."/>
            <person name="Xuan Z.X."/>
            <person name="Holehonnur R."/>
            <person name="Espinosa F."/>
            <person name="Liu S."/>
            <person name="Thyme S.B."/>
            <person name="Lopez-Garcia I.A."/>
            <person name="Mendoza D.B."/>
            <person name="Usui N."/>
            <person name="Ellegood J."/>
            <person name="Eisch A.J."/>
            <person name="Konopka G."/>
            <person name="Lerch J.P."/>
            <person name="Schier A.F."/>
            <person name="Speed H.E."/>
            <person name="Powell C.M."/>
        </authorList>
    </citation>
    <scope>UBIQUITINATION</scope>
</reference>
<dbReference type="EC" id="3.6.5.2" evidence="11"/>
<dbReference type="EMBL" id="AF014371">
    <property type="protein sequence ID" value="AAC23710.1"/>
    <property type="molecule type" value="mRNA"/>
</dbReference>
<dbReference type="EMBL" id="AF178958">
    <property type="protein sequence ID" value="AAD52675.1"/>
    <property type="molecule type" value="mRNA"/>
</dbReference>
<dbReference type="EMBL" id="AF178959">
    <property type="protein sequence ID" value="AAD52676.1"/>
    <property type="molecule type" value="mRNA"/>
</dbReference>
<dbReference type="EMBL" id="AF178960">
    <property type="protein sequence ID" value="AAD52677.1"/>
    <property type="molecule type" value="mRNA"/>
</dbReference>
<dbReference type="EMBL" id="AF178961">
    <property type="protein sequence ID" value="AAD52678.1"/>
    <property type="molecule type" value="mRNA"/>
</dbReference>
<dbReference type="EMBL" id="AK077606">
    <property type="protein sequence ID" value="BAC36896.1"/>
    <property type="molecule type" value="mRNA"/>
</dbReference>
<dbReference type="EMBL" id="AK083624">
    <property type="protein sequence ID" value="BAC38971.1"/>
    <property type="molecule type" value="mRNA"/>
</dbReference>
<dbReference type="EMBL" id="BC068115">
    <property type="protein sequence ID" value="AAH68115.1"/>
    <property type="molecule type" value="mRNA"/>
</dbReference>
<dbReference type="CCDS" id="CCDS23521.1"/>
<dbReference type="RefSeq" id="NP_001300890.1">
    <property type="nucleotide sequence ID" value="NM_001313961.1"/>
</dbReference>
<dbReference type="RefSeq" id="NP_001300891.1">
    <property type="nucleotide sequence ID" value="NM_001313962.1"/>
</dbReference>
<dbReference type="RefSeq" id="NP_058082.2">
    <property type="nucleotide sequence ID" value="NM_016802.5"/>
</dbReference>
<dbReference type="PDB" id="4F38">
    <property type="method" value="X-ray"/>
    <property type="resolution" value="2.80 A"/>
    <property type="chains" value="A=1-191"/>
</dbReference>
<dbReference type="PDB" id="7U2P">
    <property type="method" value="X-ray"/>
    <property type="resolution" value="2.60 A"/>
    <property type="chains" value="B=1-181"/>
</dbReference>
<dbReference type="PDBsum" id="4F38"/>
<dbReference type="PDBsum" id="7U2P"/>
<dbReference type="SMR" id="Q9QUI0"/>
<dbReference type="BioGRID" id="198192">
    <property type="interactions" value="60"/>
</dbReference>
<dbReference type="CORUM" id="Q9QUI0"/>
<dbReference type="DIP" id="DIP-29984N"/>
<dbReference type="FunCoup" id="Q9QUI0">
    <property type="interactions" value="3484"/>
</dbReference>
<dbReference type="IntAct" id="Q9QUI0">
    <property type="interactions" value="34"/>
</dbReference>
<dbReference type="MINT" id="Q9QUI0"/>
<dbReference type="STRING" id="10090.ENSMUSP00000007959"/>
<dbReference type="ChEMBL" id="CHEMBL4523479"/>
<dbReference type="GlyGen" id="Q9QUI0">
    <property type="glycosylation" value="1 site, 1 O-linked glycan (1 site)"/>
</dbReference>
<dbReference type="iPTMnet" id="Q9QUI0"/>
<dbReference type="PhosphoSitePlus" id="Q9QUI0"/>
<dbReference type="SwissPalm" id="Q9QUI0"/>
<dbReference type="jPOST" id="Q9QUI0"/>
<dbReference type="PaxDb" id="10090-ENSMUSP00000007959"/>
<dbReference type="ProteomicsDB" id="255214"/>
<dbReference type="Pumba" id="Q9QUI0"/>
<dbReference type="Antibodypedia" id="30508">
    <property type="antibodies" value="726 antibodies from 40 providers"/>
</dbReference>
<dbReference type="DNASU" id="11848"/>
<dbReference type="Ensembl" id="ENSMUST00000007959.14">
    <property type="protein sequence ID" value="ENSMUSP00000007959.9"/>
    <property type="gene ID" value="ENSMUSG00000007815.14"/>
</dbReference>
<dbReference type="GeneID" id="11848"/>
<dbReference type="KEGG" id="mmu:11848"/>
<dbReference type="UCSC" id="uc009rpe.2">
    <property type="organism name" value="mouse"/>
</dbReference>
<dbReference type="AGR" id="MGI:1096342"/>
<dbReference type="CTD" id="387"/>
<dbReference type="MGI" id="MGI:1096342">
    <property type="gene designation" value="Rhoa"/>
</dbReference>
<dbReference type="VEuPathDB" id="HostDB:ENSMUSG00000007815"/>
<dbReference type="eggNOG" id="KOG0393">
    <property type="taxonomic scope" value="Eukaryota"/>
</dbReference>
<dbReference type="GeneTree" id="ENSGT00950000182945"/>
<dbReference type="HOGENOM" id="CLU_041217_21_2_1"/>
<dbReference type="InParanoid" id="Q9QUI0"/>
<dbReference type="OMA" id="EVNHYIP"/>
<dbReference type="OrthoDB" id="8830751at2759"/>
<dbReference type="PhylomeDB" id="Q9QUI0"/>
<dbReference type="TreeFam" id="TF300837"/>
<dbReference type="BRENDA" id="3.6.5.2">
    <property type="organism ID" value="3474"/>
</dbReference>
<dbReference type="Reactome" id="R-MMU-114604">
    <property type="pathway name" value="GPVI-mediated activation cascade"/>
</dbReference>
<dbReference type="Reactome" id="R-MMU-193634">
    <property type="pathway name" value="Axonal growth inhibition (RHOA activation)"/>
</dbReference>
<dbReference type="Reactome" id="R-MMU-198203">
    <property type="pathway name" value="PI3K/AKT activation"/>
</dbReference>
<dbReference type="Reactome" id="R-MMU-209563">
    <property type="pathway name" value="Axonal growth stimulation"/>
</dbReference>
<dbReference type="Reactome" id="R-MMU-2173791">
    <property type="pathway name" value="TGF-beta receptor signaling in EMT (epithelial to mesenchymal transition)"/>
</dbReference>
<dbReference type="Reactome" id="R-MMU-392451">
    <property type="pathway name" value="G beta:gamma signalling through PI3Kgamma"/>
</dbReference>
<dbReference type="Reactome" id="R-MMU-3928662">
    <property type="pathway name" value="EPHB-mediated forward signaling"/>
</dbReference>
<dbReference type="Reactome" id="R-MMU-3928663">
    <property type="pathway name" value="EPHA-mediated growth cone collapse"/>
</dbReference>
<dbReference type="Reactome" id="R-MMU-4086400">
    <property type="pathway name" value="PCP/CE pathway"/>
</dbReference>
<dbReference type="Reactome" id="R-MMU-416482">
    <property type="pathway name" value="G alpha (12/13) signalling events"/>
</dbReference>
<dbReference type="Reactome" id="R-MMU-416550">
    <property type="pathway name" value="Sema4D mediated inhibition of cell attachment and migration"/>
</dbReference>
<dbReference type="Reactome" id="R-MMU-416572">
    <property type="pathway name" value="Sema4D induced cell migration and growth-cone collapse"/>
</dbReference>
<dbReference type="Reactome" id="R-MMU-4420097">
    <property type="pathway name" value="VEGFA-VEGFR2 Pathway"/>
</dbReference>
<dbReference type="Reactome" id="R-MMU-5625740">
    <property type="pathway name" value="RHO GTPases activate PKNs"/>
</dbReference>
<dbReference type="Reactome" id="R-MMU-5625900">
    <property type="pathway name" value="RHO GTPases activate CIT"/>
</dbReference>
<dbReference type="Reactome" id="R-MMU-5625970">
    <property type="pathway name" value="RHO GTPases activate KTN1"/>
</dbReference>
<dbReference type="Reactome" id="R-MMU-5627117">
    <property type="pathway name" value="RHO GTPases Activate ROCKs"/>
</dbReference>
<dbReference type="Reactome" id="R-MMU-5663220">
    <property type="pathway name" value="RHO GTPases Activate Formins"/>
</dbReference>
<dbReference type="Reactome" id="R-MMU-5666185">
    <property type="pathway name" value="RHO GTPases Activate Rhotekin and Rhophilins"/>
</dbReference>
<dbReference type="Reactome" id="R-MMU-5689896">
    <property type="pathway name" value="Ovarian tumor domain proteases"/>
</dbReference>
<dbReference type="Reactome" id="R-MMU-6785631">
    <property type="pathway name" value="ERBB2 Regulates Cell Motility"/>
</dbReference>
<dbReference type="Reactome" id="R-MMU-6798695">
    <property type="pathway name" value="Neutrophil degranulation"/>
</dbReference>
<dbReference type="Reactome" id="R-MMU-8849471">
    <property type="pathway name" value="PTK6 Regulates RHO GTPases, RAS GTPase and MAP kinases"/>
</dbReference>
<dbReference type="Reactome" id="R-MMU-8980692">
    <property type="pathway name" value="RHOA GTPase cycle"/>
</dbReference>
<dbReference type="Reactome" id="R-MMU-8985586">
    <property type="pathway name" value="SLIT2:ROBO1 increases RHOA activity"/>
</dbReference>
<dbReference type="Reactome" id="R-MMU-9013106">
    <property type="pathway name" value="RHOC GTPase cycle"/>
</dbReference>
<dbReference type="BioGRID-ORCS" id="11848">
    <property type="hits" value="18 hits in 76 CRISPR screens"/>
</dbReference>
<dbReference type="CD-CODE" id="01CA17F3">
    <property type="entry name" value="Centrosome"/>
</dbReference>
<dbReference type="CD-CODE" id="CE726F99">
    <property type="entry name" value="Postsynaptic density"/>
</dbReference>
<dbReference type="ChiTaRS" id="Rhoa">
    <property type="organism name" value="mouse"/>
</dbReference>
<dbReference type="EvolutionaryTrace" id="Q9QUI0"/>
<dbReference type="PRO" id="PR:Q9QUI0"/>
<dbReference type="Proteomes" id="UP000000589">
    <property type="component" value="Chromosome 9"/>
</dbReference>
<dbReference type="RNAct" id="Q9QUI0">
    <property type="molecule type" value="protein"/>
</dbReference>
<dbReference type="Bgee" id="ENSMUSG00000007815">
    <property type="expression patterns" value="Expressed in seminal vesicle and 253 other cell types or tissues"/>
</dbReference>
<dbReference type="ExpressionAtlas" id="Q9QUI0">
    <property type="expression patterns" value="baseline and differential"/>
</dbReference>
<dbReference type="GO" id="GO:0043296">
    <property type="term" value="C:apical junction complex"/>
    <property type="evidence" value="ECO:0007669"/>
    <property type="project" value="Ensembl"/>
</dbReference>
<dbReference type="GO" id="GO:0005938">
    <property type="term" value="C:cell cortex"/>
    <property type="evidence" value="ECO:0000250"/>
    <property type="project" value="UniProtKB"/>
</dbReference>
<dbReference type="GO" id="GO:0032154">
    <property type="term" value="C:cleavage furrow"/>
    <property type="evidence" value="ECO:0007669"/>
    <property type="project" value="UniProtKB-SubCell"/>
</dbReference>
<dbReference type="GO" id="GO:0009898">
    <property type="term" value="C:cytoplasmic side of plasma membrane"/>
    <property type="evidence" value="ECO:0000250"/>
    <property type="project" value="UniProtKB"/>
</dbReference>
<dbReference type="GO" id="GO:0005856">
    <property type="term" value="C:cytoskeleton"/>
    <property type="evidence" value="ECO:0007669"/>
    <property type="project" value="UniProtKB-SubCell"/>
</dbReference>
<dbReference type="GO" id="GO:0005829">
    <property type="term" value="C:cytosol"/>
    <property type="evidence" value="ECO:0000314"/>
    <property type="project" value="MGI"/>
</dbReference>
<dbReference type="GO" id="GO:0030425">
    <property type="term" value="C:dendrite"/>
    <property type="evidence" value="ECO:0007669"/>
    <property type="project" value="UniProtKB-SubCell"/>
</dbReference>
<dbReference type="GO" id="GO:0005768">
    <property type="term" value="C:endosome"/>
    <property type="evidence" value="ECO:0007669"/>
    <property type="project" value="Ensembl"/>
</dbReference>
<dbReference type="GO" id="GO:0098978">
    <property type="term" value="C:glutamatergic synapse"/>
    <property type="evidence" value="ECO:0007669"/>
    <property type="project" value="Ensembl"/>
</dbReference>
<dbReference type="GO" id="GO:0030027">
    <property type="term" value="C:lamellipodium"/>
    <property type="evidence" value="ECO:0000314"/>
    <property type="project" value="UniProtKB"/>
</dbReference>
<dbReference type="GO" id="GO:0030496">
    <property type="term" value="C:midbody"/>
    <property type="evidence" value="ECO:0007669"/>
    <property type="project" value="UniProtKB-SubCell"/>
</dbReference>
<dbReference type="GO" id="GO:0005739">
    <property type="term" value="C:mitochondrion"/>
    <property type="evidence" value="ECO:0007005"/>
    <property type="project" value="MGI"/>
</dbReference>
<dbReference type="GO" id="GO:0005634">
    <property type="term" value="C:nucleus"/>
    <property type="evidence" value="ECO:0000314"/>
    <property type="project" value="MGI"/>
</dbReference>
<dbReference type="GO" id="GO:0005886">
    <property type="term" value="C:plasma membrane"/>
    <property type="evidence" value="ECO:0000314"/>
    <property type="project" value="MGI"/>
</dbReference>
<dbReference type="GO" id="GO:0098794">
    <property type="term" value="C:postsynapse"/>
    <property type="evidence" value="ECO:0007669"/>
    <property type="project" value="Ensembl"/>
</dbReference>
<dbReference type="GO" id="GO:0032587">
    <property type="term" value="C:ruffle membrane"/>
    <property type="evidence" value="ECO:0000314"/>
    <property type="project" value="MGI"/>
</dbReference>
<dbReference type="GO" id="GO:0003925">
    <property type="term" value="F:G protein activity"/>
    <property type="evidence" value="ECO:0007669"/>
    <property type="project" value="UniProtKB-EC"/>
</dbReference>
<dbReference type="GO" id="GO:0005525">
    <property type="term" value="F:GTP binding"/>
    <property type="evidence" value="ECO:0000250"/>
    <property type="project" value="UniProtKB"/>
</dbReference>
<dbReference type="GO" id="GO:0003924">
    <property type="term" value="F:GTPase activity"/>
    <property type="evidence" value="ECO:0000314"/>
    <property type="project" value="MGI"/>
</dbReference>
<dbReference type="GO" id="GO:0017022">
    <property type="term" value="F:myosin binding"/>
    <property type="evidence" value="ECO:0007669"/>
    <property type="project" value="Ensembl"/>
</dbReference>
<dbReference type="GO" id="GO:0030036">
    <property type="term" value="P:actin cytoskeleton organization"/>
    <property type="evidence" value="ECO:0000314"/>
    <property type="project" value="MGI"/>
</dbReference>
<dbReference type="GO" id="GO:0002363">
    <property type="term" value="P:alpha-beta T cell lineage commitment"/>
    <property type="evidence" value="ECO:0000315"/>
    <property type="project" value="CACAO"/>
</dbReference>
<dbReference type="GO" id="GO:0030521">
    <property type="term" value="P:androgen receptor signaling pathway"/>
    <property type="evidence" value="ECO:0000314"/>
    <property type="project" value="MGI"/>
</dbReference>
<dbReference type="GO" id="GO:0001998">
    <property type="term" value="P:angiotensin-mediated vasoconstriction involved in regulation of systemic arterial blood pressure"/>
    <property type="evidence" value="ECO:0000315"/>
    <property type="project" value="MGI"/>
</dbReference>
<dbReference type="GO" id="GO:0003189">
    <property type="term" value="P:aortic valve formation"/>
    <property type="evidence" value="ECO:0007669"/>
    <property type="project" value="Ensembl"/>
</dbReference>
<dbReference type="GO" id="GO:0043297">
    <property type="term" value="P:apical junction assembly"/>
    <property type="evidence" value="ECO:0000314"/>
    <property type="project" value="UniProtKB"/>
</dbReference>
<dbReference type="GO" id="GO:0038027">
    <property type="term" value="P:apolipoprotein A-I-mediated signaling pathway"/>
    <property type="evidence" value="ECO:0007669"/>
    <property type="project" value="Ensembl"/>
</dbReference>
<dbReference type="GO" id="GO:0043366">
    <property type="term" value="P:beta selection"/>
    <property type="evidence" value="ECO:0000315"/>
    <property type="project" value="CACAO"/>
</dbReference>
<dbReference type="GO" id="GO:0061430">
    <property type="term" value="P:bone trabecula morphogenesis"/>
    <property type="evidence" value="ECO:0000315"/>
    <property type="project" value="BHF-UCL"/>
</dbReference>
<dbReference type="GO" id="GO:0007155">
    <property type="term" value="P:cell adhesion"/>
    <property type="evidence" value="ECO:0000315"/>
    <property type="project" value="MGI"/>
</dbReference>
<dbReference type="GO" id="GO:0030154">
    <property type="term" value="P:cell differentiation"/>
    <property type="evidence" value="ECO:0000314"/>
    <property type="project" value="MGI"/>
</dbReference>
<dbReference type="GO" id="GO:0016477">
    <property type="term" value="P:cell migration"/>
    <property type="evidence" value="ECO:0000250"/>
    <property type="project" value="UniProtKB"/>
</dbReference>
<dbReference type="GO" id="GO:0000902">
    <property type="term" value="P:cell morphogenesis"/>
    <property type="evidence" value="ECO:0000316"/>
    <property type="project" value="MGI"/>
</dbReference>
<dbReference type="GO" id="GO:0007160">
    <property type="term" value="P:cell-matrix adhesion"/>
    <property type="evidence" value="ECO:0000314"/>
    <property type="project" value="MGI"/>
</dbReference>
<dbReference type="GO" id="GO:1990869">
    <property type="term" value="P:cellular response to chemokine"/>
    <property type="evidence" value="ECO:0000250"/>
    <property type="project" value="UniProtKB"/>
</dbReference>
<dbReference type="GO" id="GO:0071222">
    <property type="term" value="P:cellular response to lipopolysaccharide"/>
    <property type="evidence" value="ECO:0007669"/>
    <property type="project" value="Ensembl"/>
</dbReference>
<dbReference type="GO" id="GO:0021795">
    <property type="term" value="P:cerebral cortex cell migration"/>
    <property type="evidence" value="ECO:0000315"/>
    <property type="project" value="MGI"/>
</dbReference>
<dbReference type="GO" id="GO:0036089">
    <property type="term" value="P:cleavage furrow formation"/>
    <property type="evidence" value="ECO:0000250"/>
    <property type="project" value="UniProtKB"/>
</dbReference>
<dbReference type="GO" id="GO:0031122">
    <property type="term" value="P:cytoplasmic microtubule organization"/>
    <property type="evidence" value="ECO:0000250"/>
    <property type="project" value="UniProtKB"/>
</dbReference>
<dbReference type="GO" id="GO:0007010">
    <property type="term" value="P:cytoskeleton organization"/>
    <property type="evidence" value="ECO:0000315"/>
    <property type="project" value="MGI"/>
</dbReference>
<dbReference type="GO" id="GO:0043542">
    <property type="term" value="P:endothelial cell migration"/>
    <property type="evidence" value="ECO:0000266"/>
    <property type="project" value="MGI"/>
</dbReference>
<dbReference type="GO" id="GO:0097498">
    <property type="term" value="P:endothelial tube lumen extension"/>
    <property type="evidence" value="ECO:0000266"/>
    <property type="project" value="MGI"/>
</dbReference>
<dbReference type="GO" id="GO:0045198">
    <property type="term" value="P:establishment of epithelial cell apical/basal polarity"/>
    <property type="evidence" value="ECO:0000250"/>
    <property type="project" value="UniProtKB"/>
</dbReference>
<dbReference type="GO" id="GO:0021861">
    <property type="term" value="P:forebrain radial glial cell differentiation"/>
    <property type="evidence" value="ECO:0000315"/>
    <property type="project" value="MGI"/>
</dbReference>
<dbReference type="GO" id="GO:0007229">
    <property type="term" value="P:integrin-mediated signaling pathway"/>
    <property type="evidence" value="ECO:0000304"/>
    <property type="project" value="MGI"/>
</dbReference>
<dbReference type="GO" id="GO:0001822">
    <property type="term" value="P:kidney development"/>
    <property type="evidence" value="ECO:0000316"/>
    <property type="project" value="MGI"/>
</dbReference>
<dbReference type="GO" id="GO:1903673">
    <property type="term" value="P:mitotic cleavage furrow formation"/>
    <property type="evidence" value="ECO:0000250"/>
    <property type="project" value="UniProtKB"/>
</dbReference>
<dbReference type="GO" id="GO:0090307">
    <property type="term" value="P:mitotic spindle assembly"/>
    <property type="evidence" value="ECO:0007669"/>
    <property type="project" value="Ensembl"/>
</dbReference>
<dbReference type="GO" id="GO:0097049">
    <property type="term" value="P:motor neuron apoptotic process"/>
    <property type="evidence" value="ECO:0000315"/>
    <property type="project" value="MGI"/>
</dbReference>
<dbReference type="GO" id="GO:0050919">
    <property type="term" value="P:negative chemotaxis"/>
    <property type="evidence" value="ECO:0007669"/>
    <property type="project" value="Ensembl"/>
</dbReference>
<dbReference type="GO" id="GO:0090051">
    <property type="term" value="P:negative regulation of cell migration involved in sprouting angiogenesis"/>
    <property type="evidence" value="ECO:0000266"/>
    <property type="project" value="MGI"/>
</dbReference>
<dbReference type="GO" id="GO:0045792">
    <property type="term" value="P:negative regulation of cell size"/>
    <property type="evidence" value="ECO:0007669"/>
    <property type="project" value="Ensembl"/>
</dbReference>
<dbReference type="GO" id="GO:0010812">
    <property type="term" value="P:negative regulation of cell-substrate adhesion"/>
    <property type="evidence" value="ECO:0000315"/>
    <property type="project" value="ARUK-UCL"/>
</dbReference>
<dbReference type="GO" id="GO:0033144">
    <property type="term" value="P:negative regulation of intracellular steroid hormone receptor signaling pathway"/>
    <property type="evidence" value="ECO:0000314"/>
    <property type="project" value="MGI"/>
</dbReference>
<dbReference type="GO" id="GO:2000672">
    <property type="term" value="P:negative regulation of motor neuron apoptotic process"/>
    <property type="evidence" value="ECO:0000315"/>
    <property type="project" value="MGI"/>
</dbReference>
<dbReference type="GO" id="GO:0090324">
    <property type="term" value="P:negative regulation of oxidative phosphorylation"/>
    <property type="evidence" value="ECO:0000315"/>
    <property type="project" value="CACAO"/>
</dbReference>
<dbReference type="GO" id="GO:1903427">
    <property type="term" value="P:negative regulation of reactive oxygen species biosynthetic process"/>
    <property type="evidence" value="ECO:0000315"/>
    <property type="project" value="CACAO"/>
</dbReference>
<dbReference type="GO" id="GO:1904753">
    <property type="term" value="P:negative regulation of vascular associated smooth muscle cell migration"/>
    <property type="evidence" value="ECO:0000266"/>
    <property type="project" value="MGI"/>
</dbReference>
<dbReference type="GO" id="GO:1904706">
    <property type="term" value="P:negative regulation of vascular associated smooth muscle cell proliferation"/>
    <property type="evidence" value="ECO:0000266"/>
    <property type="project" value="MGI"/>
</dbReference>
<dbReference type="GO" id="GO:0001764">
    <property type="term" value="P:neuron migration"/>
    <property type="evidence" value="ECO:0000315"/>
    <property type="project" value="MGI"/>
</dbReference>
<dbReference type="GO" id="GO:0042476">
    <property type="term" value="P:odontogenesis"/>
    <property type="evidence" value="ECO:0000270"/>
    <property type="project" value="UniProtKB"/>
</dbReference>
<dbReference type="GO" id="GO:0043931">
    <property type="term" value="P:ossification involved in bone maturation"/>
    <property type="evidence" value="ECO:0000315"/>
    <property type="project" value="BHF-UCL"/>
</dbReference>
<dbReference type="GO" id="GO:0046638">
    <property type="term" value="P:positive regulation of alpha-beta T cell differentiation"/>
    <property type="evidence" value="ECO:0000315"/>
    <property type="project" value="CACAO"/>
</dbReference>
<dbReference type="GO" id="GO:0043123">
    <property type="term" value="P:positive regulation of canonical NF-kappaB signal transduction"/>
    <property type="evidence" value="ECO:0000250"/>
    <property type="project" value="UniProtKB"/>
</dbReference>
<dbReference type="GO" id="GO:0032467">
    <property type="term" value="P:positive regulation of cytokinesis"/>
    <property type="evidence" value="ECO:0000250"/>
    <property type="project" value="UniProtKB"/>
</dbReference>
<dbReference type="GO" id="GO:1904996">
    <property type="term" value="P:positive regulation of leukocyte adhesion to vascular endothelial cell"/>
    <property type="evidence" value="ECO:0007669"/>
    <property type="project" value="Ensembl"/>
</dbReference>
<dbReference type="GO" id="GO:0045666">
    <property type="term" value="P:positive regulation of neuron differentiation"/>
    <property type="evidence" value="ECO:0000266"/>
    <property type="project" value="MGI"/>
</dbReference>
<dbReference type="GO" id="GO:0071803">
    <property type="term" value="P:positive regulation of podosome assembly"/>
    <property type="evidence" value="ECO:0000316"/>
    <property type="project" value="MGI"/>
</dbReference>
<dbReference type="GO" id="GO:0071902">
    <property type="term" value="P:positive regulation of protein serine/threonine kinase activity"/>
    <property type="evidence" value="ECO:0000250"/>
    <property type="project" value="UniProtKB"/>
</dbReference>
<dbReference type="GO" id="GO:0051496">
    <property type="term" value="P:positive regulation of stress fiber assembly"/>
    <property type="evidence" value="ECO:0000314"/>
    <property type="project" value="MGI"/>
</dbReference>
<dbReference type="GO" id="GO:2000406">
    <property type="term" value="P:positive regulation of T cell migration"/>
    <property type="evidence" value="ECO:0000250"/>
    <property type="project" value="UniProtKB"/>
</dbReference>
<dbReference type="GO" id="GO:1904695">
    <property type="term" value="P:positive regulation of vascular associated smooth muscle contraction"/>
    <property type="evidence" value="ECO:0000315"/>
    <property type="project" value="MGI"/>
</dbReference>
<dbReference type="GO" id="GO:0032956">
    <property type="term" value="P:regulation of actin cytoskeleton organization"/>
    <property type="evidence" value="ECO:0000315"/>
    <property type="project" value="CACAO"/>
</dbReference>
<dbReference type="GO" id="GO:0030334">
    <property type="term" value="P:regulation of cell migration"/>
    <property type="evidence" value="ECO:0000250"/>
    <property type="project" value="UniProtKB"/>
</dbReference>
<dbReference type="GO" id="GO:0070507">
    <property type="term" value="P:regulation of microtubule cytoskeleton organization"/>
    <property type="evidence" value="ECO:0000315"/>
    <property type="project" value="CACAO"/>
</dbReference>
<dbReference type="GO" id="GO:1905274">
    <property type="term" value="P:regulation of modification of postsynaptic actin cytoskeleton"/>
    <property type="evidence" value="ECO:0007669"/>
    <property type="project" value="Ensembl"/>
</dbReference>
<dbReference type="GO" id="GO:2000177">
    <property type="term" value="P:regulation of neural precursor cell proliferation"/>
    <property type="evidence" value="ECO:0000315"/>
    <property type="project" value="MGI"/>
</dbReference>
<dbReference type="GO" id="GO:0010975">
    <property type="term" value="P:regulation of neuron projection development"/>
    <property type="evidence" value="ECO:0000314"/>
    <property type="project" value="MGI"/>
</dbReference>
<dbReference type="GO" id="GO:0033688">
    <property type="term" value="P:regulation of osteoblast proliferation"/>
    <property type="evidence" value="ECO:0000315"/>
    <property type="project" value="BHF-UCL"/>
</dbReference>
<dbReference type="GO" id="GO:0003100">
    <property type="term" value="P:regulation of systemic arterial blood pressure by endothelin"/>
    <property type="evidence" value="ECO:0000315"/>
    <property type="project" value="MGI"/>
</dbReference>
<dbReference type="GO" id="GO:0006357">
    <property type="term" value="P:regulation of transcription by RNA polymerase II"/>
    <property type="evidence" value="ECO:0000314"/>
    <property type="project" value="MGI"/>
</dbReference>
<dbReference type="GO" id="GO:0007266">
    <property type="term" value="P:Rho protein signal transduction"/>
    <property type="evidence" value="ECO:0000315"/>
    <property type="project" value="BHF-UCL"/>
</dbReference>
<dbReference type="GO" id="GO:0035385">
    <property type="term" value="P:Roundabout signaling pathway"/>
    <property type="evidence" value="ECO:0000250"/>
    <property type="project" value="UniProtKB"/>
</dbReference>
<dbReference type="GO" id="GO:0071526">
    <property type="term" value="P:semaphorin-plexin signaling pathway"/>
    <property type="evidence" value="ECO:0000315"/>
    <property type="project" value="BHF-UCL"/>
</dbReference>
<dbReference type="GO" id="GO:1902766">
    <property type="term" value="P:skeletal muscle satellite cell migration"/>
    <property type="evidence" value="ECO:0000250"/>
    <property type="project" value="AgBase"/>
</dbReference>
<dbReference type="GO" id="GO:0007519">
    <property type="term" value="P:skeletal muscle tissue development"/>
    <property type="evidence" value="ECO:0000314"/>
    <property type="project" value="MGI"/>
</dbReference>
<dbReference type="GO" id="GO:0043149">
    <property type="term" value="P:stress fiber assembly"/>
    <property type="evidence" value="ECO:0000314"/>
    <property type="project" value="MGI"/>
</dbReference>
<dbReference type="GO" id="GO:0034446">
    <property type="term" value="P:substrate adhesion-dependent cell spreading"/>
    <property type="evidence" value="ECO:0000250"/>
    <property type="project" value="UniProtKB"/>
</dbReference>
<dbReference type="GO" id="GO:0044319">
    <property type="term" value="P:wound healing, spreading of cells"/>
    <property type="evidence" value="ECO:0000250"/>
    <property type="project" value="AgBase"/>
</dbReference>
<dbReference type="CDD" id="cd01870">
    <property type="entry name" value="RhoA_like"/>
    <property type="match status" value="1"/>
</dbReference>
<dbReference type="FunFam" id="3.40.50.300:FF:000095">
    <property type="entry name" value="Rho-related GTP-binding protein RhoC"/>
    <property type="match status" value="1"/>
</dbReference>
<dbReference type="Gene3D" id="3.40.50.300">
    <property type="entry name" value="P-loop containing nucleotide triphosphate hydrolases"/>
    <property type="match status" value="1"/>
</dbReference>
<dbReference type="InterPro" id="IPR027417">
    <property type="entry name" value="P-loop_NTPase"/>
</dbReference>
<dbReference type="InterPro" id="IPR005225">
    <property type="entry name" value="Small_GTP-bd"/>
</dbReference>
<dbReference type="InterPro" id="IPR001806">
    <property type="entry name" value="Small_GTPase"/>
</dbReference>
<dbReference type="InterPro" id="IPR003578">
    <property type="entry name" value="Small_GTPase_Rho"/>
</dbReference>
<dbReference type="NCBIfam" id="TIGR00231">
    <property type="entry name" value="small_GTP"/>
    <property type="match status" value="1"/>
</dbReference>
<dbReference type="PANTHER" id="PTHR24072">
    <property type="entry name" value="RHO FAMILY GTPASE"/>
    <property type="match status" value="1"/>
</dbReference>
<dbReference type="Pfam" id="PF00071">
    <property type="entry name" value="Ras"/>
    <property type="match status" value="1"/>
</dbReference>
<dbReference type="PRINTS" id="PR00449">
    <property type="entry name" value="RASTRNSFRMNG"/>
</dbReference>
<dbReference type="SMART" id="SM00175">
    <property type="entry name" value="RAB"/>
    <property type="match status" value="1"/>
</dbReference>
<dbReference type="SMART" id="SM00173">
    <property type="entry name" value="RAS"/>
    <property type="match status" value="1"/>
</dbReference>
<dbReference type="SMART" id="SM00174">
    <property type="entry name" value="RHO"/>
    <property type="match status" value="1"/>
</dbReference>
<dbReference type="SUPFAM" id="SSF52540">
    <property type="entry name" value="P-loop containing nucleoside triphosphate hydrolases"/>
    <property type="match status" value="1"/>
</dbReference>
<dbReference type="PROSITE" id="PS51420">
    <property type="entry name" value="RHO"/>
    <property type="match status" value="1"/>
</dbReference>
<evidence type="ECO:0000250" key="1">
    <source>
        <dbReference type="UniProtKB" id="P61585"/>
    </source>
</evidence>
<evidence type="ECO:0000250" key="2">
    <source>
        <dbReference type="UniProtKB" id="P61586"/>
    </source>
</evidence>
<evidence type="ECO:0000250" key="3">
    <source>
        <dbReference type="UniProtKB" id="P61589"/>
    </source>
</evidence>
<evidence type="ECO:0000250" key="4">
    <source>
        <dbReference type="UniProtKB" id="P62820"/>
    </source>
</evidence>
<evidence type="ECO:0000255" key="5"/>
<evidence type="ECO:0000269" key="6">
    <source>
    </source>
</evidence>
<evidence type="ECO:0000269" key="7">
    <source>
    </source>
</evidence>
<evidence type="ECO:0000269" key="8">
    <source>
    </source>
</evidence>
<evidence type="ECO:0000269" key="9">
    <source>
    </source>
</evidence>
<evidence type="ECO:0000269" key="10">
    <source>
    </source>
</evidence>
<evidence type="ECO:0000269" key="11">
    <source>
    </source>
</evidence>
<evidence type="ECO:0000269" key="12">
    <source>
    </source>
</evidence>
<evidence type="ECO:0000269" key="13">
    <source>
    </source>
</evidence>
<evidence type="ECO:0000269" key="14">
    <source>
    </source>
</evidence>
<evidence type="ECO:0000269" key="15">
    <source>
    </source>
</evidence>
<evidence type="ECO:0000269" key="16">
    <source>
    </source>
</evidence>
<evidence type="ECO:0000305" key="17"/>
<evidence type="ECO:0000305" key="18">
    <source>
    </source>
</evidence>
<evidence type="ECO:0000305" key="19">
    <source>
    </source>
</evidence>
<evidence type="ECO:0000305" key="20">
    <source>
    </source>
</evidence>
<evidence type="ECO:0007829" key="21">
    <source>
        <dbReference type="PDB" id="4F38"/>
    </source>
</evidence>
<organism>
    <name type="scientific">Mus musculus</name>
    <name type="common">Mouse</name>
    <dbReference type="NCBI Taxonomy" id="10090"/>
    <lineage>
        <taxon>Eukaryota</taxon>
        <taxon>Metazoa</taxon>
        <taxon>Chordata</taxon>
        <taxon>Craniata</taxon>
        <taxon>Vertebrata</taxon>
        <taxon>Euteleostomi</taxon>
        <taxon>Mammalia</taxon>
        <taxon>Eutheria</taxon>
        <taxon>Euarchontoglires</taxon>
        <taxon>Glires</taxon>
        <taxon>Rodentia</taxon>
        <taxon>Myomorpha</taxon>
        <taxon>Muroidea</taxon>
        <taxon>Muridae</taxon>
        <taxon>Murinae</taxon>
        <taxon>Mus</taxon>
        <taxon>Mus</taxon>
    </lineage>
</organism>
<accession>Q9QUI0</accession>
<accession>O88336</accession>
<name>RHOA_MOUSE</name>
<comment type="function">
    <text evidence="2 3 7 8 9 12 16">Small GTPase which cycles between an active GTP-bound and an inactive GDP-bound state (PubMed:14697203). Mainly associated with cytoskeleton organization, in active state binds to a variety of effector proteins to regulate cellular responses such as cytoskeletal dynamics, cell migration and cell cycle. Regulates a signal transduction pathway linking plasma membrane receptors to the assembly of focal adhesions and actin stress fibers. Involved in a microtubule-dependent signal that is required for the myosin contractile ring formation during cell cycle cytokinesis (By similarity). Plays an essential role in cleavage furrow formation. Required for the apical junction formation of keratinocyte cell-cell adhesion (PubMed:11777936, PubMed:20974804). Essential for the SPATA13-mediated regulation of cell migration and adhesion assembly and disassembly. The MEMO1-RHOA-DIAPH1 signaling pathway plays an important role in ERBB2-dependent stabilization of microtubules at the cell cortex. It controls the localization of APC and CLASP2 to the cell membrane, via the regulation of GSK3B activity. In turn, membrane-bound APC allows the localization of the MACF1 to the cell membrane, which is required for microtubule capture and stabilization (By similarity). Regulates KCNA2 potassium channel activity by reducing its location at the cell surface in response to CHRM1 activation; promotes KCNA2 endocytosis. Acts as an allosteric activator of guanine nucleotide exchange factor ECT2 by binding in its activated GTP-bound form to the PH domain of ECT2 which stimulates the release of PH inhibition and promotes the binding of substrate RHOA to the ECT2 catalytic center (By similarity). May be an activator of PLCE1 (PubMed:9635436). In neurons, involved in the inhibition of the initial spine growth. Upon activation by CaMKII, modulates dendritic spine structural plasticity by relaying CaMKII transient activation to synapse-specific, long-term signaling (By similarity). Acts as a regulator of platelet alpha-granule release during activation and aggregation of platelets (PubMed:14697203). When activated by DAAM1 may signal centrosome maturation and chromosomal segregation during cell division. May also be involved in contractile ring formation during cytokinesis.</text>
</comment>
<comment type="catalytic activity">
    <reaction evidence="11">
        <text>GTP + H2O = GDP + phosphate + H(+)</text>
        <dbReference type="Rhea" id="RHEA:19669"/>
        <dbReference type="ChEBI" id="CHEBI:15377"/>
        <dbReference type="ChEBI" id="CHEBI:15378"/>
        <dbReference type="ChEBI" id="CHEBI:37565"/>
        <dbReference type="ChEBI" id="CHEBI:43474"/>
        <dbReference type="ChEBI" id="CHEBI:58189"/>
        <dbReference type="EC" id="3.6.5.2"/>
    </reaction>
    <physiologicalReaction direction="left-to-right" evidence="19">
        <dbReference type="Rhea" id="RHEA:19670"/>
    </physiologicalReaction>
</comment>
<comment type="activity regulation">
    <text evidence="2">Regulated by guanine nucleotide exchange factors (GEFs) which promote the exchange of bound GDP for free GTP, GTPase activating proteins (GAPs) which increase the GTP hydrolysis activity and GDP dissociation inhibitors which inhibit the dissociation of the nucleotide from the GTPase. Activated by GEFs such as ARHGEF2, ARHGEF3, ARHGEF28 and BCR. Inhibited by GAPs such as ARHGAP30. Inhibited by GDP dissociation inhibitors such as ARHGDIA.</text>
</comment>
<comment type="subunit">
    <text evidence="2 6 9 13 14 15 16">Interacts with ARHGEF28 (PubMed:11058585). Interacts (via GTP-bound form) with RIPOR1 (via N-terminus); this interaction links RHOA to STK24 and STK26 kinases. Interacts with RIPOR2 (via active GTP- or inactive GDP-bound forms) isoform 1 and isoform 2; these interactions are direct, block the loading of GTP to RHOA and decrease upon chemokine CCL19 stimulation in primary T lymphocytes. Binds PRKCL1, ROCK1 and ROCK2 (By similarity). Interacts with ARHGEF2, ARHGEF3, NET1 and RTKN (PubMed:8662891, PubMed:9535835). Interacts with PLCE1 and AKAP13 (By similarity). Interacts with DIAPH1 (PubMed:9214622). Interacts (in the constitutively activated, GTP-bound form) with DGKQ. Interacts with RACK1; enhances RHOA activation. Interacts with PKP4; the interaction is detected at the midbody (By similarity). Interacts (GTP-bound form preferentially) with PKN2; the interaction stimulates autophosphorylation and phosphorylation of PKN2 (PubMed:20974804). Interacts with ARHGDIA; this interaction inactivates and stabilizes RHOA. Interacts with ARHGDIB (By similarity). Interacts (GTP-bound form) with KCNA2 (via cytoplasmic N-terminal domain) (PubMed:9635436). Interacts (GTP-bound form) with ECT2; the interaction results in allosteric activation of ECT2 (By similarity). Interacts with RAP1GDS1; the interaction is direct and in a 1:1 stoichiometry (By similarity).</text>
</comment>
<comment type="interaction">
    <interactant intactId="EBI-643583">
        <id>Q9QUI0</id>
    </interactant>
    <interactant intactId="EBI-1162441">
        <id>Q8C6B2</id>
        <label>Rtkn</label>
    </interactant>
    <organismsDiffer>false</organismsDiffer>
    <experiments>3</experiments>
</comment>
<comment type="interaction">
    <interactant intactId="EBI-643583">
        <id>Q9QUI0</id>
    </interactant>
    <interactant intactId="EBI-446694">
        <id>Q9BST9</id>
        <label>RTKN</label>
    </interactant>
    <organismsDiffer>true</organismsDiffer>
    <experiments>2</experiments>
</comment>
<comment type="subcellular location">
    <subcellularLocation>
        <location evidence="2">Cell membrane</location>
        <topology evidence="2">Lipid-anchor</topology>
        <orientation evidence="2">Cytoplasmic side</orientation>
    </subcellularLocation>
    <subcellularLocation>
        <location evidence="2">Cytoplasm</location>
        <location evidence="2">Cytoskeleton</location>
    </subcellularLocation>
    <subcellularLocation>
        <location evidence="2">Cleavage furrow</location>
    </subcellularLocation>
    <subcellularLocation>
        <location evidence="2">Cytoplasm</location>
        <location evidence="2">Cell cortex</location>
    </subcellularLocation>
    <subcellularLocation>
        <location evidence="2">Midbody</location>
    </subcellularLocation>
    <subcellularLocation>
        <location evidence="7 10">Cell projection</location>
        <location evidence="7 10">Lamellipodium</location>
    </subcellularLocation>
    <subcellularLocation>
        <location evidence="11">Cell projection</location>
        <location evidence="11">Dendrite</location>
    </subcellularLocation>
    <subcellularLocation>
        <location evidence="2">Nucleus</location>
    </subcellularLocation>
    <subcellularLocation>
        <location evidence="2">Cytoplasm</location>
    </subcellularLocation>
    <text evidence="2 7 12">Localized to cell-cell contacts in calcium-treated keratinocytes (PubMed:11777936). Translocates to the equatorial region before furrow formation in a ECT2-dependent manner. Localizes to the equatorial cell cortex (at the site of the presumptive furrow) in early anaphase in an activated form and in a myosin- and actin-independent manner (By similarity). Colocalizes with KANK1 at the contractile ring. Colocalizes with DAAM1 and KANK1 around centrosomes.</text>
</comment>
<comment type="induction">
    <text evidence="7">Up-regulated during keratinocyte differentiation.</text>
</comment>
<comment type="PTM">
    <text evidence="2 20">Ubiquitinated by the BCR(KCTD13) and BCR(TNFAIP1) E3 ubiquitin ligase complexes, leading to its degradation by the proteasome, thereby regulating the actin cytoskeleton and synaptic transmission in neurons. Ubiquitinated at Lys-135 in a FBXL19-mediated manner; leading to proteasomal degradation (By similarity).</text>
</comment>
<comment type="PTM">
    <text evidence="2 3">Phosphorylation by PRKG1 at Ser-188 inactivates RHOA signaling (By similarity). Phosphorylation by SLK at Ser-188 in response to AGTR2 activation (By similarity).</text>
</comment>
<comment type="PTM">
    <text evidence="8">Serotonylation of Gln-63 by TGM2 during activation and aggregation of platelets leads to constitutive activation of GTPase activity.</text>
</comment>
<comment type="similarity">
    <text evidence="17">Belongs to the small GTPase superfamily. Rho family.</text>
</comment>
<gene>
    <name type="primary">Rhoa</name>
    <name type="synonym">Arha</name>
    <name type="synonym">Arha2</name>
</gene>
<feature type="chain" id="PRO_0000030413" description="Transforming protein RhoA">
    <location>
        <begin position="1"/>
        <end position="190"/>
    </location>
</feature>
<feature type="propeptide" id="PRO_0000030414" description="Removed in mature form" evidence="1">
    <location>
        <begin position="191"/>
        <end position="193"/>
    </location>
</feature>
<feature type="region of interest" description="Switch II region; involved in RAP1GDS1 isoform 3 binding" evidence="2">
    <location>
        <begin position="61"/>
        <end position="78"/>
    </location>
</feature>
<feature type="short sequence motif" description="Effector region" evidence="5">
    <location>
        <begin position="34"/>
        <end position="42"/>
    </location>
</feature>
<feature type="binding site" evidence="2">
    <location>
        <begin position="12"/>
        <end position="19"/>
    </location>
    <ligand>
        <name>GTP</name>
        <dbReference type="ChEBI" id="CHEBI:37565"/>
    </ligand>
</feature>
<feature type="binding site" evidence="4">
    <location>
        <begin position="30"/>
        <end position="37"/>
    </location>
    <ligand>
        <name>GTP</name>
        <dbReference type="ChEBI" id="CHEBI:37565"/>
    </ligand>
</feature>
<feature type="binding site" evidence="4">
    <location>
        <begin position="59"/>
        <end position="63"/>
    </location>
    <ligand>
        <name>GTP</name>
        <dbReference type="ChEBI" id="CHEBI:37565"/>
    </ligand>
</feature>
<feature type="binding site" evidence="2">
    <location>
        <begin position="117"/>
        <end position="120"/>
    </location>
    <ligand>
        <name>GTP</name>
        <dbReference type="ChEBI" id="CHEBI:37565"/>
    </ligand>
</feature>
<feature type="binding site" evidence="4">
    <location>
        <begin position="160"/>
        <end position="162"/>
    </location>
    <ligand>
        <name>GTP</name>
        <dbReference type="ChEBI" id="CHEBI:37565"/>
    </ligand>
</feature>
<feature type="modified residue" description="5-glutamyl serotonin" evidence="18">
    <location>
        <position position="63"/>
    </location>
</feature>
<feature type="modified residue" description="Phosphoserine; by PKG/PRKG1" evidence="3">
    <location>
        <position position="188"/>
    </location>
</feature>
<feature type="modified residue" description="Cysteine methyl ester" evidence="1">
    <location>
        <position position="190"/>
    </location>
</feature>
<feature type="lipid moiety-binding region" description="S-geranylgeranyl cysteine" evidence="1">
    <location>
        <position position="190"/>
    </location>
</feature>
<feature type="cross-link" description="Glycyl lysine isopeptide (Lys-Gly) (interchain with G-Cter in ubiquitin)" evidence="2">
    <location>
        <position position="135"/>
    </location>
</feature>
<feature type="sequence conflict" description="In Ref. 1; AAC23710." evidence="17" ref="1">
    <original>R</original>
    <variation>C</variation>
    <location>
        <position position="68"/>
    </location>
</feature>
<feature type="strand" evidence="21">
    <location>
        <begin position="4"/>
        <end position="11"/>
    </location>
</feature>
<feature type="helix" evidence="21">
    <location>
        <begin position="18"/>
        <end position="26"/>
    </location>
</feature>
<feature type="strand" evidence="21">
    <location>
        <begin position="42"/>
        <end position="47"/>
    </location>
</feature>
<feature type="strand" evidence="21">
    <location>
        <begin position="52"/>
        <end position="58"/>
    </location>
</feature>
<feature type="helix" evidence="21">
    <location>
        <begin position="64"/>
        <end position="66"/>
    </location>
</feature>
<feature type="turn" evidence="21">
    <location>
        <begin position="67"/>
        <end position="69"/>
    </location>
</feature>
<feature type="helix" evidence="21">
    <location>
        <begin position="70"/>
        <end position="73"/>
    </location>
</feature>
<feature type="strand" evidence="21">
    <location>
        <begin position="78"/>
        <end position="85"/>
    </location>
</feature>
<feature type="helix" evidence="21">
    <location>
        <begin position="89"/>
        <end position="93"/>
    </location>
</feature>
<feature type="turn" evidence="21">
    <location>
        <begin position="94"/>
        <end position="98"/>
    </location>
</feature>
<feature type="helix" evidence="21">
    <location>
        <begin position="99"/>
        <end position="106"/>
    </location>
</feature>
<feature type="strand" evidence="21">
    <location>
        <begin position="112"/>
        <end position="117"/>
    </location>
</feature>
<feature type="helix" evidence="21">
    <location>
        <begin position="119"/>
        <end position="121"/>
    </location>
</feature>
<feature type="helix" evidence="21">
    <location>
        <begin position="125"/>
        <end position="133"/>
    </location>
</feature>
<feature type="helix" evidence="21">
    <location>
        <begin position="141"/>
        <end position="150"/>
    </location>
</feature>
<feature type="strand" evidence="21">
    <location>
        <begin position="154"/>
        <end position="158"/>
    </location>
</feature>
<feature type="turn" evidence="21">
    <location>
        <begin position="161"/>
        <end position="163"/>
    </location>
</feature>
<feature type="helix" evidence="21">
    <location>
        <begin position="167"/>
        <end position="178"/>
    </location>
</feature>
<keyword id="KW-0002">3D-structure</keyword>
<keyword id="KW-0131">Cell cycle</keyword>
<keyword id="KW-0132">Cell division</keyword>
<keyword id="KW-1003">Cell membrane</keyword>
<keyword id="KW-0966">Cell projection</keyword>
<keyword id="KW-0963">Cytoplasm</keyword>
<keyword id="KW-0206">Cytoskeleton</keyword>
<keyword id="KW-0342">GTP-binding</keyword>
<keyword id="KW-0378">Hydrolase</keyword>
<keyword id="KW-1017">Isopeptide bond</keyword>
<keyword id="KW-0449">Lipoprotein</keyword>
<keyword id="KW-0472">Membrane</keyword>
<keyword id="KW-0488">Methylation</keyword>
<keyword id="KW-0547">Nucleotide-binding</keyword>
<keyword id="KW-0539">Nucleus</keyword>
<keyword id="KW-0597">Phosphoprotein</keyword>
<keyword id="KW-0636">Prenylation</keyword>
<keyword id="KW-0656">Proto-oncogene</keyword>
<keyword id="KW-1185">Reference proteome</keyword>
<keyword id="KW-0832">Ubl conjugation</keyword>
<sequence>MAAIRKKLVIVGDGACGKTCLLIVFSKDQFPEVYVPTVFENYVADIEVDGKQVELALWDTAGQEDYDRLRPLSYPDTDVILMCFSIDSPDSLENIPEKWTPEVKHFCPNVPIILVGNKKDLRNDEHTRRELAKMKQEPVKPEEGRDMANRIGAFGYMECSAKTKDGVREVFEMATRAALQARRGKKKSGCLIL</sequence>